<reference evidence="5" key="1">
    <citation type="journal article" date="2012" name="Syst. Biol.">
        <title>Peptidomics-based phylogeny and biogeography of Mantophasmatodea (Hexapoda).</title>
        <authorList>
            <person name="Predel R."/>
            <person name="Neupert S."/>
            <person name="Huetteroth W."/>
            <person name="Kahnt J."/>
            <person name="Waidelich D."/>
            <person name="Roth S."/>
        </authorList>
    </citation>
    <scope>PROTEIN SEQUENCE</scope>
    <scope>AMIDATION AT LEU-9</scope>
    <source>
        <tissue evidence="3">Thoracic perisympathetic organs</tissue>
    </source>
</reference>
<protein>
    <recommendedName>
        <fullName evidence="4">Extended FMRFamide-7</fullName>
        <shortName evidence="4">FMRFa-7</shortName>
    </recommendedName>
</protein>
<evidence type="ECO:0000250" key="1">
    <source>
        <dbReference type="UniProtKB" id="P34405"/>
    </source>
</evidence>
<evidence type="ECO:0000255" key="2"/>
<evidence type="ECO:0000269" key="3">
    <source>
    </source>
</evidence>
<evidence type="ECO:0000303" key="4">
    <source>
    </source>
</evidence>
<evidence type="ECO:0000305" key="5"/>
<evidence type="ECO:0000305" key="6">
    <source>
    </source>
</evidence>
<accession>B0M3B0</accession>
<sequence>ARSDNFVRL</sequence>
<feature type="peptide" id="PRO_0000420744" description="Extended FMRFamide-7" evidence="3">
    <location>
        <begin position="1"/>
        <end position="9"/>
    </location>
</feature>
<feature type="modified residue" description="Leucine amide" evidence="3">
    <location>
        <position position="9"/>
    </location>
</feature>
<feature type="unsure residue" description="L or I" evidence="3">
    <location>
        <position position="9"/>
    </location>
</feature>
<organism>
    <name type="scientific">Striatophasma naukluftense</name>
    <name type="common">Gladiator</name>
    <name type="synonym">Heel-walker</name>
    <dbReference type="NCBI Taxonomy" id="1041429"/>
    <lineage>
        <taxon>Eukaryota</taxon>
        <taxon>Metazoa</taxon>
        <taxon>Ecdysozoa</taxon>
        <taxon>Arthropoda</taxon>
        <taxon>Hexapoda</taxon>
        <taxon>Insecta</taxon>
        <taxon>Pterygota</taxon>
        <taxon>Neoptera</taxon>
        <taxon>Polyneoptera</taxon>
        <taxon>Mantophasmatodea</taxon>
        <taxon>Austrophasmatidae</taxon>
        <taxon>Striatophasma</taxon>
    </lineage>
</organism>
<comment type="function">
    <text evidence="1">FMRFamides and FMRFamide-like peptides are neuropeptides.</text>
</comment>
<comment type="subcellular location">
    <subcellularLocation>
        <location evidence="6">Secreted</location>
    </subcellularLocation>
</comment>
<comment type="similarity">
    <text evidence="2">Belongs to the FARP (FMRF amide related peptide) family.</text>
</comment>
<proteinExistence type="evidence at protein level"/>
<dbReference type="GO" id="GO:0005576">
    <property type="term" value="C:extracellular region"/>
    <property type="evidence" value="ECO:0007669"/>
    <property type="project" value="UniProtKB-SubCell"/>
</dbReference>
<dbReference type="GO" id="GO:0007218">
    <property type="term" value="P:neuropeptide signaling pathway"/>
    <property type="evidence" value="ECO:0007669"/>
    <property type="project" value="UniProtKB-KW"/>
</dbReference>
<keyword id="KW-0027">Amidation</keyword>
<keyword id="KW-0903">Direct protein sequencing</keyword>
<keyword id="KW-0527">Neuropeptide</keyword>
<keyword id="KW-0964">Secreted</keyword>
<name>FAR7_STRNA</name>